<evidence type="ECO:0000255" key="1"/>
<evidence type="ECO:0000255" key="2">
    <source>
        <dbReference type="PROSITE-ProRule" id="PRU00091"/>
    </source>
</evidence>
<evidence type="ECO:0000256" key="3">
    <source>
        <dbReference type="SAM" id="MobiDB-lite"/>
    </source>
</evidence>
<evidence type="ECO:0000269" key="4">
    <source>
    </source>
</evidence>
<evidence type="ECO:0000269" key="5">
    <source>
    </source>
</evidence>
<evidence type="ECO:0000269" key="6">
    <source>
    </source>
</evidence>
<evidence type="ECO:0000269" key="7">
    <source>
    </source>
</evidence>
<evidence type="ECO:0000269" key="8">
    <source>
    </source>
</evidence>
<evidence type="ECO:0000269" key="9">
    <source>
    </source>
</evidence>
<evidence type="ECO:0000303" key="10">
    <source>
    </source>
</evidence>
<evidence type="ECO:0000303" key="11">
    <source>
    </source>
</evidence>
<evidence type="ECO:0000303" key="12">
    <source>
    </source>
</evidence>
<evidence type="ECO:0000305" key="13"/>
<evidence type="ECO:0000305" key="14">
    <source>
    </source>
</evidence>
<evidence type="ECO:0007744" key="15">
    <source>
    </source>
</evidence>
<evidence type="ECO:0007744" key="16">
    <source>
    </source>
</evidence>
<evidence type="ECO:0007744" key="17">
    <source>
    </source>
</evidence>
<evidence type="ECO:0007744" key="18">
    <source>
    </source>
</evidence>
<evidence type="ECO:0007744" key="19">
    <source>
    </source>
</evidence>
<evidence type="ECO:0007744" key="20">
    <source>
    </source>
</evidence>
<evidence type="ECO:0007744" key="21">
    <source>
    </source>
</evidence>
<evidence type="ECO:0007744" key="22">
    <source>
    </source>
</evidence>
<evidence type="ECO:0007744" key="23">
    <source>
    </source>
</evidence>
<evidence type="ECO:0007744" key="24">
    <source>
    </source>
</evidence>
<name>ANCHR_HUMAN</name>
<gene>
    <name type="primary">ZFYVE19</name>
    <name type="synonym">ANCHR</name>
    <name type="synonym">MPFYVE</name>
</gene>
<proteinExistence type="evidence at protein level"/>
<sequence length="471" mass="51546">MNYDSQQPPLPPLPYAGCRRASGFPALGRGGTVPVGVWGGAGQGREGRSWGEGPRGPGLGRRDLSSADPAVLGATMESRCYGCAVKFTLFKKEYGCKNCGRAFCSGCLSFSAAVPRTGNTQQKVCKQCHEVLTRGSSANASKWSPPQNYKKRVAALEAKQKPSTSQSQGLTRQDQMIAERLARLRQENKPKLVPSQAEIEARLAALKDERQGSIPSTQEMEARLAALQGRVLPSQTPQPAHHTPDTRTQAQQTQDLLTQLAAEVAIDESWKGGGPAASLQNDLNQGGPGSTNSKRQANWSLEEEKSRLLAEAALELREENTRQERILALAKRLAMLRGQDPERVTLQDYRLPDSDDDEDEETAIQRVLQQLTEEASLDEASGFNIPAEQASRPWTQPRGAEPEAQDVDPRPEAEEEELPWCCICNEDATLRCAGCDGDLFCARCFREGHDAFELKEHQTSAYSPPRAGQEH</sequence>
<protein>
    <recommendedName>
        <fullName>Abscission/NoCut checkpoint regulator</fullName>
        <shortName>ANCHR</shortName>
    </recommendedName>
    <alternativeName>
        <fullName>MLL partner containing FYVE domain</fullName>
    </alternativeName>
    <alternativeName>
        <fullName>Zinc finger FYVE domain-containing protein 19</fullName>
    </alternativeName>
</protein>
<organism>
    <name type="scientific">Homo sapiens</name>
    <name type="common">Human</name>
    <dbReference type="NCBI Taxonomy" id="9606"/>
    <lineage>
        <taxon>Eukaryota</taxon>
        <taxon>Metazoa</taxon>
        <taxon>Chordata</taxon>
        <taxon>Craniata</taxon>
        <taxon>Vertebrata</taxon>
        <taxon>Euteleostomi</taxon>
        <taxon>Mammalia</taxon>
        <taxon>Eutheria</taxon>
        <taxon>Euarchontoglires</taxon>
        <taxon>Primates</taxon>
        <taxon>Haplorrhini</taxon>
        <taxon>Catarrhini</taxon>
        <taxon>Hominidae</taxon>
        <taxon>Homo</taxon>
    </lineage>
</organism>
<accession>Q96K21</accession>
<accession>B3KVB2</accession>
<accession>C9JNF4</accession>
<accession>H3BUF9</accession>
<accession>Q86WC2</accession>
<accession>Q8WU96</accession>
<feature type="chain" id="PRO_0000098718" description="Abscission/NoCut checkpoint regulator">
    <location>
        <begin position="1"/>
        <end position="471"/>
    </location>
</feature>
<feature type="zinc finger region" description="FYVE-type" evidence="2">
    <location>
        <begin position="74"/>
        <end position="133"/>
    </location>
</feature>
<feature type="region of interest" description="Disordered" evidence="3">
    <location>
        <begin position="39"/>
        <end position="64"/>
    </location>
</feature>
<feature type="region of interest" description="Disordered" evidence="3">
    <location>
        <begin position="271"/>
        <end position="299"/>
    </location>
</feature>
<feature type="region of interest" description="Disordered" evidence="3">
    <location>
        <begin position="386"/>
        <end position="412"/>
    </location>
</feature>
<feature type="coiled-coil region" evidence="1">
    <location>
        <begin position="311"/>
        <end position="375"/>
    </location>
</feature>
<feature type="short sequence motif" description="MIM1-A">
    <location>
        <begin position="174"/>
        <end position="187"/>
    </location>
</feature>
<feature type="short sequence motif" description="MIM1-B">
    <location>
        <begin position="326"/>
        <end position="339"/>
    </location>
</feature>
<feature type="compositionally biased region" description="Polar residues" evidence="3">
    <location>
        <begin position="278"/>
        <end position="299"/>
    </location>
</feature>
<feature type="binding site" evidence="2">
    <location>
        <position position="80"/>
    </location>
    <ligand>
        <name>Zn(2+)</name>
        <dbReference type="ChEBI" id="CHEBI:29105"/>
        <label>1</label>
    </ligand>
</feature>
<feature type="binding site" evidence="2">
    <location>
        <position position="83"/>
    </location>
    <ligand>
        <name>Zn(2+)</name>
        <dbReference type="ChEBI" id="CHEBI:29105"/>
        <label>1</label>
    </ligand>
</feature>
<feature type="binding site" evidence="2">
    <location>
        <position position="96"/>
    </location>
    <ligand>
        <name>Zn(2+)</name>
        <dbReference type="ChEBI" id="CHEBI:29105"/>
        <label>2</label>
    </ligand>
</feature>
<feature type="binding site" evidence="2">
    <location>
        <position position="99"/>
    </location>
    <ligand>
        <name>Zn(2+)</name>
        <dbReference type="ChEBI" id="CHEBI:29105"/>
        <label>2</label>
    </ligand>
</feature>
<feature type="binding site" evidence="2">
    <location>
        <position position="104"/>
    </location>
    <ligand>
        <name>Zn(2+)</name>
        <dbReference type="ChEBI" id="CHEBI:29105"/>
        <label>1</label>
    </ligand>
</feature>
<feature type="binding site" evidence="2">
    <location>
        <position position="107"/>
    </location>
    <ligand>
        <name>Zn(2+)</name>
        <dbReference type="ChEBI" id="CHEBI:29105"/>
        <label>1</label>
    </ligand>
</feature>
<feature type="binding site" evidence="2">
    <location>
        <position position="125"/>
    </location>
    <ligand>
        <name>Zn(2+)</name>
        <dbReference type="ChEBI" id="CHEBI:29105"/>
        <label>2</label>
    </ligand>
</feature>
<feature type="binding site" evidence="2">
    <location>
        <position position="128"/>
    </location>
    <ligand>
        <name>Zn(2+)</name>
        <dbReference type="ChEBI" id="CHEBI:29105"/>
        <label>2</label>
    </ligand>
</feature>
<feature type="site" description="Breakpoint for translocation to form KMT2A/MLL1-ZFYVE19">
    <location>
        <begin position="145"/>
        <end position="146"/>
    </location>
</feature>
<feature type="modified residue" description="Phosphoserine" evidence="21">
    <location>
        <position position="144"/>
    </location>
</feature>
<feature type="modified residue" description="Phosphothreonine" evidence="19">
    <location>
        <position position="243"/>
    </location>
</feature>
<feature type="modified residue" description="Phosphoserine" evidence="21">
    <location>
        <position position="293"/>
    </location>
</feature>
<feature type="modified residue" description="Phosphoserine" evidence="15 16 17 18 19 20 21 22">
    <location>
        <position position="354"/>
    </location>
</feature>
<feature type="modified residue" description="Phosphoserine" evidence="19 21">
    <location>
        <position position="463"/>
    </location>
</feature>
<feature type="cross-link" description="Glycyl lysine isopeptide (Lys-Gly) (interchain with G-Cter in SUMO2)" evidence="23 24">
    <location>
        <position position="207"/>
    </location>
</feature>
<feature type="splice variant" id="VSP_046008" description="In isoform 4." evidence="11">
    <location>
        <begin position="1"/>
        <end position="175"/>
    </location>
</feature>
<feature type="splice variant" id="VSP_013791" description="In isoform 2." evidence="10">
    <original>MNYDSQQPPLPPLPYAGCRRASGFPALGRGGTVPVGVWGGAGQGREGRSWGEGPRGPGLGRRDLSSADPAVLGATMESRCYGCAVKFTLFKKE</original>
    <variation>MPAVAEALGQEGPPDLSRSAFLATVLTSLSAAFSSMPSSAYSLPFSRSLELDYHTSSCFRGTMVKADCPVPITDLPDSSGKLQ</variation>
    <location>
        <begin position="1"/>
        <end position="93"/>
    </location>
</feature>
<feature type="splice variant" id="VSP_013792" description="In isoform 3." evidence="12">
    <location>
        <begin position="276"/>
        <end position="343"/>
    </location>
</feature>
<feature type="sequence variant" id="VAR_087108" description="In PFIC9; several lines of evidence suggest that M-76 may be the main initiator, a variant at this location would therefore disrupt translation initiation; dbSNP:rs1215965232." evidence="8">
    <original>M</original>
    <variation>V</variation>
    <location>
        <position position="76"/>
    </location>
</feature>
<feature type="sequence variant" id="VAR_087109" description="In PFIC9; undetectable protein levels in the liver of a homozygous patient; dbSNP:rs769683740." evidence="8">
    <location>
        <begin position="105"/>
        <end position="471"/>
    </location>
</feature>
<feature type="sequence variant" id="VAR_087110" description="In PFIC9." evidence="8">
    <location>
        <begin position="127"/>
        <end position="471"/>
    </location>
</feature>
<feature type="sequence variant" id="VAR_087111" description="In PFIC9; undetectable protein levels in the liver of a homozygous patient." evidence="8">
    <location>
        <begin position="172"/>
        <end position="471"/>
    </location>
</feature>
<feature type="sequence variant" id="VAR_087112" description="In PFIC9; dbSNP:rs771251472." evidence="8">
    <location>
        <begin position="183"/>
        <end position="471"/>
    </location>
</feature>
<feature type="sequence variant" id="VAR_057494" description="In dbSNP:rs34819163.">
    <original>R</original>
    <variation>H</variation>
    <location>
        <position position="210"/>
    </location>
</feature>
<feature type="sequence variant" id="VAR_087113" description="In PFIC9; dbSNP:rs375497733." evidence="9">
    <location>
        <begin position="223"/>
        <end position="471"/>
    </location>
</feature>
<feature type="sequence variant" id="VAR_060474" description="In dbSNP:rs690347." evidence="5 6">
    <original>S</original>
    <variation>A</variation>
    <location>
        <position position="376"/>
    </location>
</feature>
<feature type="sequence variant" id="VAR_060475" description="In dbSNP:rs72735636.">
    <original>R</original>
    <variation>C</variation>
    <location>
        <position position="398"/>
    </location>
</feature>
<feature type="mutagenesis site" description="Abolishes binding to phosphatidylinositol-3-phosphate (PtdIns(3)P) without affecting localization to the midbody." evidence="7">
    <original>R</original>
    <variation>A</variation>
    <location>
        <position position="101"/>
    </location>
</feature>
<feature type="sequence conflict" description="In Ref. 5; AAH21092." evidence="13" ref="5">
    <original>C</original>
    <variation>R</variation>
    <location>
        <position position="104"/>
    </location>
</feature>
<feature type="modified residue" description="Phosphoserine" evidence="18">
    <location sequence="Q96K21-3">
        <position position="286"/>
    </location>
</feature>
<reference key="1">
    <citation type="journal article" date="2003" name="Oncogene">
        <title>A t(11;15) fuses MLL to two different genes, AF15q14 and a novel gene MPFYVE on chromosome 15.</title>
        <authorList>
            <person name="Chinwalla V."/>
            <person name="Chien A."/>
            <person name="Odero M."/>
            <person name="Neilly M.B."/>
            <person name="Zeleznik-Le N.J."/>
            <person name="Rowley J.D."/>
        </authorList>
    </citation>
    <scope>NUCLEOTIDE SEQUENCE [MRNA] (ISOFORM 2)</scope>
    <scope>CHROMOSOMAL TRANSLOCATION WITH KMT2A/MLL1</scope>
    <scope>TISSUE SPECIFICITY</scope>
</reference>
<reference key="2">
    <citation type="journal article" date="2004" name="Nat. Genet.">
        <title>Complete sequencing and characterization of 21,243 full-length human cDNAs.</title>
        <authorList>
            <person name="Ota T."/>
            <person name="Suzuki Y."/>
            <person name="Nishikawa T."/>
            <person name="Otsuki T."/>
            <person name="Sugiyama T."/>
            <person name="Irie R."/>
            <person name="Wakamatsu A."/>
            <person name="Hayashi K."/>
            <person name="Sato H."/>
            <person name="Nagai K."/>
            <person name="Kimura K."/>
            <person name="Makita H."/>
            <person name="Sekine M."/>
            <person name="Obayashi M."/>
            <person name="Nishi T."/>
            <person name="Shibahara T."/>
            <person name="Tanaka T."/>
            <person name="Ishii S."/>
            <person name="Yamamoto J."/>
            <person name="Saito K."/>
            <person name="Kawai Y."/>
            <person name="Isono Y."/>
            <person name="Nakamura Y."/>
            <person name="Nagahari K."/>
            <person name="Murakami K."/>
            <person name="Yasuda T."/>
            <person name="Iwayanagi T."/>
            <person name="Wagatsuma M."/>
            <person name="Shiratori A."/>
            <person name="Sudo H."/>
            <person name="Hosoiri T."/>
            <person name="Kaku Y."/>
            <person name="Kodaira H."/>
            <person name="Kondo H."/>
            <person name="Sugawara M."/>
            <person name="Takahashi M."/>
            <person name="Kanda K."/>
            <person name="Yokoi T."/>
            <person name="Furuya T."/>
            <person name="Kikkawa E."/>
            <person name="Omura Y."/>
            <person name="Abe K."/>
            <person name="Kamihara K."/>
            <person name="Katsuta N."/>
            <person name="Sato K."/>
            <person name="Tanikawa M."/>
            <person name="Yamazaki M."/>
            <person name="Ninomiya K."/>
            <person name="Ishibashi T."/>
            <person name="Yamashita H."/>
            <person name="Murakawa K."/>
            <person name="Fujimori K."/>
            <person name="Tanai H."/>
            <person name="Kimata M."/>
            <person name="Watanabe M."/>
            <person name="Hiraoka S."/>
            <person name="Chiba Y."/>
            <person name="Ishida S."/>
            <person name="Ono Y."/>
            <person name="Takiguchi S."/>
            <person name="Watanabe S."/>
            <person name="Yosida M."/>
            <person name="Hotuta T."/>
            <person name="Kusano J."/>
            <person name="Kanehori K."/>
            <person name="Takahashi-Fujii A."/>
            <person name="Hara H."/>
            <person name="Tanase T.-O."/>
            <person name="Nomura Y."/>
            <person name="Togiya S."/>
            <person name="Komai F."/>
            <person name="Hara R."/>
            <person name="Takeuchi K."/>
            <person name="Arita M."/>
            <person name="Imose N."/>
            <person name="Musashino K."/>
            <person name="Yuuki H."/>
            <person name="Oshima A."/>
            <person name="Sasaki N."/>
            <person name="Aotsuka S."/>
            <person name="Yoshikawa Y."/>
            <person name="Matsunawa H."/>
            <person name="Ichihara T."/>
            <person name="Shiohata N."/>
            <person name="Sano S."/>
            <person name="Moriya S."/>
            <person name="Momiyama H."/>
            <person name="Satoh N."/>
            <person name="Takami S."/>
            <person name="Terashima Y."/>
            <person name="Suzuki O."/>
            <person name="Nakagawa S."/>
            <person name="Senoh A."/>
            <person name="Mizoguchi H."/>
            <person name="Goto Y."/>
            <person name="Shimizu F."/>
            <person name="Wakebe H."/>
            <person name="Hishigaki H."/>
            <person name="Watanabe T."/>
            <person name="Sugiyama A."/>
            <person name="Takemoto M."/>
            <person name="Kawakami B."/>
            <person name="Yamazaki M."/>
            <person name="Watanabe K."/>
            <person name="Kumagai A."/>
            <person name="Itakura S."/>
            <person name="Fukuzumi Y."/>
            <person name="Fujimori Y."/>
            <person name="Komiyama M."/>
            <person name="Tashiro H."/>
            <person name="Tanigami A."/>
            <person name="Fujiwara T."/>
            <person name="Ono T."/>
            <person name="Yamada K."/>
            <person name="Fujii Y."/>
            <person name="Ozaki K."/>
            <person name="Hirao M."/>
            <person name="Ohmori Y."/>
            <person name="Kawabata A."/>
            <person name="Hikiji T."/>
            <person name="Kobatake N."/>
            <person name="Inagaki H."/>
            <person name="Ikema Y."/>
            <person name="Okamoto S."/>
            <person name="Okitani R."/>
            <person name="Kawakami T."/>
            <person name="Noguchi S."/>
            <person name="Itoh T."/>
            <person name="Shigeta K."/>
            <person name="Senba T."/>
            <person name="Matsumura K."/>
            <person name="Nakajima Y."/>
            <person name="Mizuno T."/>
            <person name="Morinaga M."/>
            <person name="Sasaki M."/>
            <person name="Togashi T."/>
            <person name="Oyama M."/>
            <person name="Hata H."/>
            <person name="Watanabe M."/>
            <person name="Komatsu T."/>
            <person name="Mizushima-Sugano J."/>
            <person name="Satoh T."/>
            <person name="Shirai Y."/>
            <person name="Takahashi Y."/>
            <person name="Nakagawa K."/>
            <person name="Okumura K."/>
            <person name="Nagase T."/>
            <person name="Nomura N."/>
            <person name="Kikuchi H."/>
            <person name="Masuho Y."/>
            <person name="Yamashita R."/>
            <person name="Nakai K."/>
            <person name="Yada T."/>
            <person name="Nakamura Y."/>
            <person name="Ohara O."/>
            <person name="Isogai T."/>
            <person name="Sugano S."/>
        </authorList>
    </citation>
    <scope>NUCLEOTIDE SEQUENCE [LARGE SCALE MRNA] (ISOFORM 4)</scope>
    <scope>NUCLEOTIDE SEQUENCE [LARGE SCALE MRNA] OF 19-471 (ISOFORM 1)</scope>
    <scope>VARIANT ALA-376</scope>
    <source>
        <tissue>Ovary</tissue>
        <tissue>Synovium</tissue>
    </source>
</reference>
<reference key="3">
    <citation type="journal article" date="2006" name="Nature">
        <title>Analysis of the DNA sequence and duplication history of human chromosome 15.</title>
        <authorList>
            <person name="Zody M.C."/>
            <person name="Garber M."/>
            <person name="Sharpe T."/>
            <person name="Young S.K."/>
            <person name="Rowen L."/>
            <person name="O'Neill K."/>
            <person name="Whittaker C.A."/>
            <person name="Kamal M."/>
            <person name="Chang J.L."/>
            <person name="Cuomo C.A."/>
            <person name="Dewar K."/>
            <person name="FitzGerald M.G."/>
            <person name="Kodira C.D."/>
            <person name="Madan A."/>
            <person name="Qin S."/>
            <person name="Yang X."/>
            <person name="Abbasi N."/>
            <person name="Abouelleil A."/>
            <person name="Arachchi H.M."/>
            <person name="Baradarani L."/>
            <person name="Birditt B."/>
            <person name="Bloom S."/>
            <person name="Bloom T."/>
            <person name="Borowsky M.L."/>
            <person name="Burke J."/>
            <person name="Butler J."/>
            <person name="Cook A."/>
            <person name="DeArellano K."/>
            <person name="DeCaprio D."/>
            <person name="Dorris L. III"/>
            <person name="Dors M."/>
            <person name="Eichler E.E."/>
            <person name="Engels R."/>
            <person name="Fahey J."/>
            <person name="Fleetwood P."/>
            <person name="Friedman C."/>
            <person name="Gearin G."/>
            <person name="Hall J.L."/>
            <person name="Hensley G."/>
            <person name="Johnson E."/>
            <person name="Jones C."/>
            <person name="Kamat A."/>
            <person name="Kaur A."/>
            <person name="Locke D.P."/>
            <person name="Madan A."/>
            <person name="Munson G."/>
            <person name="Jaffe D.B."/>
            <person name="Lui A."/>
            <person name="Macdonald P."/>
            <person name="Mauceli E."/>
            <person name="Naylor J.W."/>
            <person name="Nesbitt R."/>
            <person name="Nicol R."/>
            <person name="O'Leary S.B."/>
            <person name="Ratcliffe A."/>
            <person name="Rounsley S."/>
            <person name="She X."/>
            <person name="Sneddon K.M.B."/>
            <person name="Stewart S."/>
            <person name="Sougnez C."/>
            <person name="Stone S.M."/>
            <person name="Topham K."/>
            <person name="Vincent D."/>
            <person name="Wang S."/>
            <person name="Zimmer A.R."/>
            <person name="Birren B.W."/>
            <person name="Hood L."/>
            <person name="Lander E.S."/>
            <person name="Nusbaum C."/>
        </authorList>
    </citation>
    <scope>NUCLEOTIDE SEQUENCE [LARGE SCALE GENOMIC DNA]</scope>
</reference>
<reference key="4">
    <citation type="submission" date="2005-07" db="EMBL/GenBank/DDBJ databases">
        <authorList>
            <person name="Mural R.J."/>
            <person name="Istrail S."/>
            <person name="Sutton G."/>
            <person name="Florea L."/>
            <person name="Halpern A.L."/>
            <person name="Mobarry C.M."/>
            <person name="Lippert R."/>
            <person name="Walenz B."/>
            <person name="Shatkay H."/>
            <person name="Dew I."/>
            <person name="Miller J.R."/>
            <person name="Flanigan M.J."/>
            <person name="Edwards N.J."/>
            <person name="Bolanos R."/>
            <person name="Fasulo D."/>
            <person name="Halldorsson B.V."/>
            <person name="Hannenhalli S."/>
            <person name="Turner R."/>
            <person name="Yooseph S."/>
            <person name="Lu F."/>
            <person name="Nusskern D.R."/>
            <person name="Shue B.C."/>
            <person name="Zheng X.H."/>
            <person name="Zhong F."/>
            <person name="Delcher A.L."/>
            <person name="Huson D.H."/>
            <person name="Kravitz S.A."/>
            <person name="Mouchard L."/>
            <person name="Reinert K."/>
            <person name="Remington K.A."/>
            <person name="Clark A.G."/>
            <person name="Waterman M.S."/>
            <person name="Eichler E.E."/>
            <person name="Adams M.D."/>
            <person name="Hunkapiller M.W."/>
            <person name="Myers E.W."/>
            <person name="Venter J.C."/>
        </authorList>
    </citation>
    <scope>NUCLEOTIDE SEQUENCE [LARGE SCALE GENOMIC DNA]</scope>
</reference>
<reference key="5">
    <citation type="journal article" date="2004" name="Genome Res.">
        <title>The status, quality, and expansion of the NIH full-length cDNA project: the Mammalian Gene Collection (MGC).</title>
        <authorList>
            <consortium name="The MGC Project Team"/>
        </authorList>
    </citation>
    <scope>NUCLEOTIDE SEQUENCE [LARGE SCALE MRNA] OF 64-471 (ISOFORM 3)</scope>
    <scope>VARIANT ALA-376</scope>
    <source>
        <tissue>Lung</tissue>
    </source>
</reference>
<reference key="6">
    <citation type="journal article" date="2008" name="J. Proteome Res.">
        <title>Phosphorylation analysis of primary human T lymphocytes using sequential IMAC and titanium oxide enrichment.</title>
        <authorList>
            <person name="Carrascal M."/>
            <person name="Ovelleiro D."/>
            <person name="Casas V."/>
            <person name="Gay M."/>
            <person name="Abian J."/>
        </authorList>
    </citation>
    <scope>PHOSPHORYLATION [LARGE SCALE ANALYSIS] AT SER-354</scope>
    <scope>IDENTIFICATION BY MASS SPECTROMETRY [LARGE SCALE ANALYSIS]</scope>
    <source>
        <tissue>T-cell</tissue>
    </source>
</reference>
<reference key="7">
    <citation type="journal article" date="2008" name="Proc. Natl. Acad. Sci. U.S.A.">
        <title>A quantitative atlas of mitotic phosphorylation.</title>
        <authorList>
            <person name="Dephoure N."/>
            <person name="Zhou C."/>
            <person name="Villen J."/>
            <person name="Beausoleil S.A."/>
            <person name="Bakalarski C.E."/>
            <person name="Elledge S.J."/>
            <person name="Gygi S.P."/>
        </authorList>
    </citation>
    <scope>PHOSPHORYLATION [LARGE SCALE ANALYSIS] AT SER-354</scope>
    <scope>IDENTIFICATION BY MASS SPECTROMETRY [LARGE SCALE ANALYSIS]</scope>
    <source>
        <tissue>Cervix carcinoma</tissue>
    </source>
</reference>
<reference key="8">
    <citation type="journal article" date="2008" name="Proteomics">
        <title>Large-scale phosphoproteome analysis of human liver tissue by enrichment and fractionation of phosphopeptides with strong anion exchange chromatography.</title>
        <authorList>
            <person name="Han G."/>
            <person name="Ye M."/>
            <person name="Zhou H."/>
            <person name="Jiang X."/>
            <person name="Feng S."/>
            <person name="Jiang X."/>
            <person name="Tian R."/>
            <person name="Wan D."/>
            <person name="Zou H."/>
            <person name="Gu J."/>
        </authorList>
    </citation>
    <scope>PHOSPHORYLATION [LARGE SCALE ANALYSIS] AT SER-354</scope>
    <scope>IDENTIFICATION BY MASS SPECTROMETRY [LARGE SCALE ANALYSIS]</scope>
    <source>
        <tissue>Liver</tissue>
    </source>
</reference>
<reference key="9">
    <citation type="journal article" date="2009" name="Sci. Signal.">
        <title>Quantitative phosphoproteomic analysis of T cell receptor signaling reveals system-wide modulation of protein-protein interactions.</title>
        <authorList>
            <person name="Mayya V."/>
            <person name="Lundgren D.H."/>
            <person name="Hwang S.-I."/>
            <person name="Rezaul K."/>
            <person name="Wu L."/>
            <person name="Eng J.K."/>
            <person name="Rodionov V."/>
            <person name="Han D.K."/>
        </authorList>
    </citation>
    <scope>PHOSPHORYLATION [LARGE SCALE ANALYSIS] AT SER-354</scope>
    <scope>PHOSPHORYLATION [LARGE SCALE ANALYSIS] AT SER-286 (ISOFORM 3)</scope>
    <scope>IDENTIFICATION BY MASS SPECTROMETRY [LARGE SCALE ANALYSIS]</scope>
    <source>
        <tissue>Leukemic T-cell</tissue>
    </source>
</reference>
<reference key="10">
    <citation type="journal article" date="2010" name="Sci. Signal.">
        <title>Quantitative phosphoproteomics reveals widespread full phosphorylation site occupancy during mitosis.</title>
        <authorList>
            <person name="Olsen J.V."/>
            <person name="Vermeulen M."/>
            <person name="Santamaria A."/>
            <person name="Kumar C."/>
            <person name="Miller M.L."/>
            <person name="Jensen L.J."/>
            <person name="Gnad F."/>
            <person name="Cox J."/>
            <person name="Jensen T.S."/>
            <person name="Nigg E.A."/>
            <person name="Brunak S."/>
            <person name="Mann M."/>
        </authorList>
    </citation>
    <scope>PHOSPHORYLATION [LARGE SCALE ANALYSIS] AT THR-243; SER-354 AND SER-463</scope>
    <scope>IDENTIFICATION BY MASS SPECTROMETRY [LARGE SCALE ANALYSIS]</scope>
    <source>
        <tissue>Cervix carcinoma</tissue>
    </source>
</reference>
<reference key="11">
    <citation type="journal article" date="2011" name="Sci. Signal.">
        <title>System-wide temporal characterization of the proteome and phosphoproteome of human embryonic stem cell differentiation.</title>
        <authorList>
            <person name="Rigbolt K.T."/>
            <person name="Prokhorova T.A."/>
            <person name="Akimov V."/>
            <person name="Henningsen J."/>
            <person name="Johansen P.T."/>
            <person name="Kratchmarova I."/>
            <person name="Kassem M."/>
            <person name="Mann M."/>
            <person name="Olsen J.V."/>
            <person name="Blagoev B."/>
        </authorList>
    </citation>
    <scope>PHOSPHORYLATION [LARGE SCALE ANALYSIS] AT SER-354</scope>
    <scope>IDENTIFICATION BY MASS SPECTROMETRY [LARGE SCALE ANALYSIS]</scope>
</reference>
<reference key="12">
    <citation type="journal article" date="2013" name="J. Proteome Res.">
        <title>Toward a comprehensive characterization of a human cancer cell phosphoproteome.</title>
        <authorList>
            <person name="Zhou H."/>
            <person name="Di Palma S."/>
            <person name="Preisinger C."/>
            <person name="Peng M."/>
            <person name="Polat A.N."/>
            <person name="Heck A.J."/>
            <person name="Mohammed S."/>
        </authorList>
    </citation>
    <scope>PHOSPHORYLATION [LARGE SCALE ANALYSIS] AT SER-144; SER-293; SER-354 AND SER-463</scope>
    <scope>IDENTIFICATION BY MASS SPECTROMETRY [LARGE SCALE ANALYSIS]</scope>
    <source>
        <tissue>Cervix carcinoma</tissue>
        <tissue>Erythroleukemia</tissue>
    </source>
</reference>
<reference key="13">
    <citation type="journal article" date="2014" name="J. Proteomics">
        <title>An enzyme assisted RP-RPLC approach for in-depth analysis of human liver phosphoproteome.</title>
        <authorList>
            <person name="Bian Y."/>
            <person name="Song C."/>
            <person name="Cheng K."/>
            <person name="Dong M."/>
            <person name="Wang F."/>
            <person name="Huang J."/>
            <person name="Sun D."/>
            <person name="Wang L."/>
            <person name="Ye M."/>
            <person name="Zou H."/>
        </authorList>
    </citation>
    <scope>PHOSPHORYLATION [LARGE SCALE ANALYSIS] AT SER-354</scope>
    <scope>IDENTIFICATION BY MASS SPECTROMETRY [LARGE SCALE ANALYSIS]</scope>
    <source>
        <tissue>Liver</tissue>
    </source>
</reference>
<reference key="14">
    <citation type="journal article" date="2014" name="Nat. Cell Biol.">
        <title>ANCHR mediates Aurora-B-dependent abscission checkpoint control through retention of VPS4.</title>
        <authorList>
            <person name="Thoresen S.B."/>
            <person name="Campsteijn C."/>
            <person name="Vietri M."/>
            <person name="Schink K.O."/>
            <person name="Liestoel K."/>
            <person name="Andersen J.S."/>
            <person name="Raiborg C."/>
            <person name="Stenmark H."/>
        </authorList>
    </citation>
    <scope>FUNCTION</scope>
    <scope>SUBCELLULAR LOCATION</scope>
    <scope>INTERACTION WITH VPS4A</scope>
    <scope>MUTAGENESIS OF ARG-101</scope>
    <scope>IN VITRO PHOSPHORYLATION</scope>
</reference>
<reference key="15">
    <citation type="journal article" date="2014" name="Nat. Struct. Mol. Biol.">
        <title>Uncovering global SUMOylation signaling networks in a site-specific manner.</title>
        <authorList>
            <person name="Hendriks I.A."/>
            <person name="D'Souza R.C."/>
            <person name="Yang B."/>
            <person name="Verlaan-de Vries M."/>
            <person name="Mann M."/>
            <person name="Vertegaal A.C."/>
        </authorList>
    </citation>
    <scope>SUMOYLATION [LARGE SCALE ANALYSIS] AT LYS-207</scope>
    <scope>IDENTIFICATION BY MASS SPECTROMETRY [LARGE SCALE ANALYSIS]</scope>
</reference>
<reference key="16">
    <citation type="journal article" date="2017" name="Nat. Struct. Mol. Biol.">
        <title>Site-specific mapping of the human SUMO proteome reveals co-modification with phosphorylation.</title>
        <authorList>
            <person name="Hendriks I.A."/>
            <person name="Lyon D."/>
            <person name="Young C."/>
            <person name="Jensen L.J."/>
            <person name="Vertegaal A.C."/>
            <person name="Nielsen M.L."/>
        </authorList>
    </citation>
    <scope>SUMOYLATION [LARGE SCALE ANALYSIS] AT LYS-207</scope>
    <scope>IDENTIFICATION BY MASS SPECTROMETRY [LARGE SCALE ANALYSIS]</scope>
</reference>
<reference key="17">
    <citation type="journal article" date="2021" name="J. Med. Genet.">
        <title>Biallelic loss-of-function ZFYVE19 mutations are associated with congenital hepatic fibrosis, sclerosing cholangiopathy and high-GGT cholestasis.</title>
        <authorList>
            <person name="Luan W."/>
            <person name="Hao C.Z."/>
            <person name="Li J.Q."/>
            <person name="Wei Q."/>
            <person name="Gong J.Y."/>
            <person name="Qiu Y.L."/>
            <person name="Lu Y."/>
            <person name="Shen C.H."/>
            <person name="Xia Q."/>
            <person name="Xie X.B."/>
            <person name="Zhang M.H."/>
            <person name="Abuduxikuer K."/>
            <person name="Li Z.D."/>
            <person name="Wang L."/>
            <person name="Xing Q.H."/>
            <person name="Knisely A.S."/>
            <person name="Wang J.S."/>
        </authorList>
    </citation>
    <scope>INVOLVEMENT IN PFIC9</scope>
    <scope>VARIANTS PFIC9 VAL-76; 105-SER--HIS-471 DEL; 127-GLN--HIS-471 DEL; 172-ARG--HIS-471 DEL AND 183-ARG--HIS-471 DEL</scope>
    <scope>TISSUE SPECIFICITY</scope>
    <scope>TRANSLATION FROM MET-76</scope>
    <scope>CHARACTERIZATION OF VARIANTS PFIC9 105-SER--HIS-471 DEL AND 172-ARG--HIS-471 DEL</scope>
</reference>
<reference key="18">
    <citation type="journal article" date="2021" name="Orphanet J. Rare Dis.">
        <title>A ZFYVE19 gene mutation associated with neonatal cholestasis and cilia dysfunction: case report with a novel pathogenic variant.</title>
        <authorList>
            <person name="Mandato C."/>
            <person name="Siano M.A."/>
            <person name="Nazzaro L."/>
            <person name="Gelzo M."/>
            <person name="Francalanci P."/>
            <person name="Rizzo F."/>
            <person name="D'Agostino Y."/>
            <person name="Morleo M."/>
            <person name="Brillante S."/>
            <person name="Weisz A."/>
            <person name="Franco B."/>
            <person name="Vajro P."/>
        </authorList>
    </citation>
    <scope>INVOLVEMENT IN PFIC9</scope>
    <scope>VARIANT PFIC9 223-ARG--HIS-471 DEL</scope>
</reference>
<comment type="function">
    <text evidence="7">Key regulator of abscission step in cytokinesis: part of the cytokinesis checkpoint, a process required to delay abscission to prevent both premature resolution of intercellular chromosome bridges and accumulation of DNA damage. Together with CHMP4C, required to retain abscission-competent VPS4 (VPS4A and/or VPS4B) at the midbody ring until abscission checkpoint signaling is terminated at late cytokinesis. Deactivation of AURKB results in dephosphorylation of CHMP4C followed by its dissociation from ZFYVE19/ANCHR and VPS4 and subsequent abscission.</text>
</comment>
<comment type="subunit">
    <text evidence="7">Interacts (via MIM1-B) with VPS4A; interaction takes place at the midbody ring following cytokinesis checkpoint activation.</text>
</comment>
<comment type="interaction">
    <interactant intactId="EBI-6448240">
        <id>Q96K21</id>
    </interactant>
    <interactant intactId="EBI-21535880">
        <id>Q92870-2</id>
        <label>APBB2</label>
    </interactant>
    <organismsDiffer>false</organismsDiffer>
    <experiments>3</experiments>
</comment>
<comment type="interaction">
    <interactant intactId="EBI-6448240">
        <id>Q96K21</id>
    </interactant>
    <interactant intactId="EBI-10213454">
        <id>Q7Z479</id>
        <label>CAPN7</label>
    </interactant>
    <organismsDiffer>false</organismsDiffer>
    <experiments>3</experiments>
</comment>
<comment type="interaction">
    <interactant intactId="EBI-6448240">
        <id>Q96K21</id>
    </interactant>
    <interactant intactId="EBI-744973">
        <id>Q9C005</id>
        <label>DPY30</label>
    </interactant>
    <organismsDiffer>false</organismsDiffer>
    <experiments>3</experiments>
</comment>
<comment type="interaction">
    <interactant intactId="EBI-6448240">
        <id>Q96K21</id>
    </interactant>
    <interactant intactId="EBI-352682">
        <id>P04792</id>
        <label>HSPB1</label>
    </interactant>
    <organismsDiffer>false</organismsDiffer>
    <experiments>3</experiments>
</comment>
<comment type="interaction">
    <interactant intactId="EBI-6448240">
        <id>Q96K21</id>
    </interactant>
    <interactant intactId="EBI-466029">
        <id>P42858</id>
        <label>HTT</label>
    </interactant>
    <organismsDiffer>false</organismsDiffer>
    <experiments>21</experiments>
</comment>
<comment type="interaction">
    <interactant intactId="EBI-6448240">
        <id>Q96K21</id>
    </interactant>
    <interactant intactId="EBI-2691489">
        <id>Q8WV92</id>
        <label>MITD1</label>
    </interactant>
    <organismsDiffer>false</organismsDiffer>
    <experiments>6</experiments>
</comment>
<comment type="interaction">
    <interactant intactId="EBI-6448240">
        <id>Q96K21</id>
    </interactant>
    <interactant intactId="EBI-2514459">
        <id>O75351</id>
        <label>VPS4B</label>
    </interactant>
    <organismsDiffer>false</organismsDiffer>
    <experiments>7</experiments>
</comment>
<comment type="interaction">
    <interactant intactId="EBI-16106990">
        <id>Q96K21-1</id>
    </interactant>
    <interactant intactId="EBI-1171942">
        <id>Q9UN37</id>
        <label>VPS4A</label>
    </interactant>
    <organismsDiffer>false</organismsDiffer>
    <experiments>3</experiments>
</comment>
<comment type="interaction">
    <interactant intactId="EBI-10187928">
        <id>Q96K21-3</id>
    </interactant>
    <interactant intactId="EBI-710484">
        <id>O15169</id>
        <label>AXIN1</label>
    </interactant>
    <organismsDiffer>false</organismsDiffer>
    <experiments>3</experiments>
</comment>
<comment type="interaction">
    <interactant intactId="EBI-10187928">
        <id>Q96K21-3</id>
    </interactant>
    <interactant intactId="EBI-10213454">
        <id>Q7Z479</id>
        <label>CAPN7</label>
    </interactant>
    <organismsDiffer>false</organismsDiffer>
    <experiments>3</experiments>
</comment>
<comment type="interaction">
    <interactant intactId="EBI-10187928">
        <id>Q96K21-3</id>
    </interactant>
    <interactant intactId="EBI-10175300">
        <id>Q8TD31-3</id>
        <label>CCHCR1</label>
    </interactant>
    <organismsDiffer>false</organismsDiffer>
    <experiments>3</experiments>
</comment>
<comment type="interaction">
    <interactant intactId="EBI-10187928">
        <id>Q96K21-3</id>
    </interactant>
    <interactant intactId="EBI-2691489">
        <id>Q8WV92</id>
        <label>MITD1</label>
    </interactant>
    <organismsDiffer>false</organismsDiffer>
    <experiments>3</experiments>
</comment>
<comment type="interaction">
    <interactant intactId="EBI-10187928">
        <id>Q96K21-3</id>
    </interactant>
    <interactant intactId="EBI-2514459">
        <id>O75351</id>
        <label>VPS4B</label>
    </interactant>
    <organismsDiffer>false</organismsDiffer>
    <experiments>3</experiments>
</comment>
<comment type="subcellular location">
    <subcellularLocation>
        <location evidence="7">Cytoplasm</location>
        <location evidence="7">Cytoskeleton</location>
        <location evidence="7">Microtubule organizing center</location>
        <location evidence="7">Centrosome</location>
    </subcellularLocation>
    <subcellularLocation>
        <location evidence="7">Cleavage furrow</location>
    </subcellularLocation>
    <subcellularLocation>
        <location evidence="7">Midbody</location>
        <location evidence="7">Midbody ring</location>
    </subcellularLocation>
    <text evidence="7">Localizes mainly on centrosomes in interphase and early mitosis. Localizes at the cleavage furrow and midbody ring in late mitosis and cytokinesis.</text>
</comment>
<comment type="alternative products">
    <event type="alternative splicing"/>
    <isoform>
        <id>Q96K21-1</id>
        <name>1</name>
        <sequence type="displayed"/>
    </isoform>
    <isoform>
        <id>Q96K21-2</id>
        <name>2</name>
        <sequence type="described" ref="VSP_013791"/>
    </isoform>
    <isoform>
        <id>Q96K21-3</id>
        <name>3</name>
        <sequence type="described" ref="VSP_013792"/>
    </isoform>
    <isoform>
        <id>Q96K21-4</id>
        <name>4</name>
        <sequence type="described" ref="VSP_046008"/>
    </isoform>
</comment>
<comment type="tissue specificity">
    <text evidence="4 8">Detected in brain, heart, skeletal muscle and kidney (PubMed:12618766). Expressed in the liver (at protein level) (PubMed:12618766, PubMed:32737136).</text>
</comment>
<comment type="domain">
    <text evidence="7">The FYVE-type zinc finger mediates binding to phosphatidylinositol-3-phosphate (PtdIns(3)P).</text>
</comment>
<comment type="domain">
    <text evidence="7">The MIM1-B motif mediates interaction with VPS4A.</text>
</comment>
<comment type="PTM">
    <text evidence="7">Phosphorylated in vitro at Ser-22 by AURKB; however, phosphorylation at this site could not be confirmed in vivo.</text>
</comment>
<comment type="disease">
    <text evidence="4">A chromosomal aberration involving ZFYVE19 is associated with acute myeloblastic leukemia (AML). Translocation t(11;15)(q23;q14) with KMT2A/MLL1 (PubMed:12618766).</text>
</comment>
<comment type="disease" evidence="8 9">
    <disease id="DI-06404">
        <name>Cholestasis, progressive familial intrahepatic, 9</name>
        <acronym>PFIC9</acronym>
        <description>An autosomal recessive form of progressive cholestasis, a disorder characterized by early onset of cholestasis that progresses to hepatic fibrosis, cirrhosis, and end-stage liver disease. PFIC9 onset is in infancy or early childhood.</description>
        <dbReference type="MIM" id="619849"/>
    </disease>
    <text evidence="14">The disease is caused by variants affecting the gene represented in this entry. Some evidences point to Met-76 as the main translation initiation site. In this context, PFIC9-associated variant p.M76V can disrupt translation initiation.</text>
</comment>
<comment type="caution">
    <text evidence="14">It is uncertain whether Met-1 or Met-76 is the initiator. In the liver, the main translation initiation site may be Met-76.</text>
</comment>
<comment type="sequence caution" evidence="13">
    <conflict type="erroneous initiation">
        <sequence resource="EMBL-CDS" id="AAH21092"/>
    </conflict>
    <text>Truncated N-terminus.</text>
</comment>
<comment type="sequence caution" evidence="13">
    <conflict type="frameshift">
        <sequence resource="EMBL-CDS" id="AAO73862"/>
    </conflict>
</comment>
<comment type="sequence caution" evidence="13">
    <conflict type="erroneous initiation">
        <sequence resource="EMBL-CDS" id="BAB55338"/>
    </conflict>
    <text>Truncated N-terminus.</text>
</comment>
<dbReference type="EMBL" id="AF445414">
    <property type="protein sequence ID" value="AAO73862.1"/>
    <property type="status" value="ALT_FRAME"/>
    <property type="molecule type" value="mRNA"/>
</dbReference>
<dbReference type="EMBL" id="AK027746">
    <property type="protein sequence ID" value="BAB55338.1"/>
    <property type="status" value="ALT_INIT"/>
    <property type="molecule type" value="mRNA"/>
</dbReference>
<dbReference type="EMBL" id="AK122779">
    <property type="protein sequence ID" value="BAG53724.1"/>
    <property type="molecule type" value="mRNA"/>
</dbReference>
<dbReference type="EMBL" id="AC012476">
    <property type="status" value="NOT_ANNOTATED_CDS"/>
    <property type="molecule type" value="Genomic_DNA"/>
</dbReference>
<dbReference type="EMBL" id="CH471125">
    <property type="protein sequence ID" value="EAW92451.1"/>
    <property type="molecule type" value="Genomic_DNA"/>
</dbReference>
<dbReference type="EMBL" id="BC021092">
    <property type="protein sequence ID" value="AAH21092.1"/>
    <property type="status" value="ALT_INIT"/>
    <property type="molecule type" value="mRNA"/>
</dbReference>
<dbReference type="CCDS" id="CCDS42025.1">
    <molecule id="Q96K21-1"/>
</dbReference>
<dbReference type="CCDS" id="CCDS58353.1">
    <molecule id="Q96K21-2"/>
</dbReference>
<dbReference type="CCDS" id="CCDS58354.1">
    <molecule id="Q96K21-3"/>
</dbReference>
<dbReference type="CCDS" id="CCDS58355.1">
    <molecule id="Q96K21-4"/>
</dbReference>
<dbReference type="RefSeq" id="NP_001070736.1">
    <molecule id="Q96K21-1"/>
    <property type="nucleotide sequence ID" value="NM_001077268.2"/>
</dbReference>
<dbReference type="RefSeq" id="NP_001245349.1">
    <molecule id="Q96K21-3"/>
    <property type="nucleotide sequence ID" value="NM_001258420.2"/>
</dbReference>
<dbReference type="RefSeq" id="NP_001245350.1">
    <molecule id="Q96K21-4"/>
    <property type="nucleotide sequence ID" value="NM_001258421.2"/>
</dbReference>
<dbReference type="RefSeq" id="NP_116239.3">
    <molecule id="Q96K21-2"/>
    <property type="nucleotide sequence ID" value="NM_032850.4"/>
</dbReference>
<dbReference type="SMR" id="Q96K21"/>
<dbReference type="BioGRID" id="124370">
    <property type="interactions" value="55"/>
</dbReference>
<dbReference type="DIP" id="DIP-60854N"/>
<dbReference type="FunCoup" id="Q96K21">
    <property type="interactions" value="164"/>
</dbReference>
<dbReference type="IntAct" id="Q96K21">
    <property type="interactions" value="14"/>
</dbReference>
<dbReference type="STRING" id="9606.ENSP00000347498"/>
<dbReference type="GlyCosmos" id="Q96K21">
    <property type="glycosylation" value="4 sites, 2 glycans"/>
</dbReference>
<dbReference type="GlyGen" id="Q96K21">
    <property type="glycosylation" value="4 sites, 2 O-linked glycans (4 sites)"/>
</dbReference>
<dbReference type="iPTMnet" id="Q96K21"/>
<dbReference type="MetOSite" id="Q96K21"/>
<dbReference type="PhosphoSitePlus" id="Q96K21"/>
<dbReference type="BioMuta" id="ZFYVE19"/>
<dbReference type="DMDM" id="296453076"/>
<dbReference type="jPOST" id="Q96K21"/>
<dbReference type="MassIVE" id="Q96K21"/>
<dbReference type="PaxDb" id="9606-ENSP00000347498"/>
<dbReference type="PeptideAtlas" id="Q96K21"/>
<dbReference type="ProteomicsDB" id="42921"/>
<dbReference type="ProteomicsDB" id="77031">
    <molecule id="Q96K21-1"/>
</dbReference>
<dbReference type="ProteomicsDB" id="77032">
    <molecule id="Q96K21-2"/>
</dbReference>
<dbReference type="ProteomicsDB" id="77033">
    <molecule id="Q96K21-3"/>
</dbReference>
<dbReference type="Pumba" id="Q96K21"/>
<dbReference type="Antibodypedia" id="23171">
    <property type="antibodies" value="200 antibodies from 30 providers"/>
</dbReference>
<dbReference type="DNASU" id="84936"/>
<dbReference type="Ensembl" id="ENST00000299173.14">
    <molecule id="Q96K21-3"/>
    <property type="protein sequence ID" value="ENSP00000299173.10"/>
    <property type="gene ID" value="ENSG00000166140.17"/>
</dbReference>
<dbReference type="Ensembl" id="ENST00000336455.9">
    <molecule id="Q96K21-2"/>
    <property type="protein sequence ID" value="ENSP00000337824.5"/>
    <property type="gene ID" value="ENSG00000166140.17"/>
</dbReference>
<dbReference type="Ensembl" id="ENST00000355341.8">
    <molecule id="Q96K21-1"/>
    <property type="protein sequence ID" value="ENSP00000347498.4"/>
    <property type="gene ID" value="ENSG00000166140.17"/>
</dbReference>
<dbReference type="Ensembl" id="ENST00000564258.5">
    <molecule id="Q96K21-4"/>
    <property type="protein sequence ID" value="ENSP00000457617.1"/>
    <property type="gene ID" value="ENSG00000166140.17"/>
</dbReference>
<dbReference type="GeneID" id="84936"/>
<dbReference type="KEGG" id="hsa:84936"/>
<dbReference type="MANE-Select" id="ENST00000355341.8">
    <property type="protein sequence ID" value="ENSP00000347498.4"/>
    <property type="RefSeq nucleotide sequence ID" value="NM_001077268.2"/>
    <property type="RefSeq protein sequence ID" value="NP_001070736.1"/>
</dbReference>
<dbReference type="UCSC" id="uc001zmt.2">
    <molecule id="Q96K21-1"/>
    <property type="organism name" value="human"/>
</dbReference>
<dbReference type="AGR" id="HGNC:20758"/>
<dbReference type="CTD" id="84936"/>
<dbReference type="DisGeNET" id="84936"/>
<dbReference type="GeneCards" id="ZFYVE19"/>
<dbReference type="HGNC" id="HGNC:20758">
    <property type="gene designation" value="ZFYVE19"/>
</dbReference>
<dbReference type="HPA" id="ENSG00000166140">
    <property type="expression patterns" value="Low tissue specificity"/>
</dbReference>
<dbReference type="MalaCards" id="ZFYVE19"/>
<dbReference type="MIM" id="619635">
    <property type="type" value="gene"/>
</dbReference>
<dbReference type="MIM" id="619849">
    <property type="type" value="phenotype"/>
</dbReference>
<dbReference type="neXtProt" id="NX_Q96K21"/>
<dbReference type="OpenTargets" id="ENSG00000166140"/>
<dbReference type="PharmGKB" id="PA134906967"/>
<dbReference type="VEuPathDB" id="HostDB:ENSG00000166140"/>
<dbReference type="eggNOG" id="KOG1818">
    <property type="taxonomic scope" value="Eukaryota"/>
</dbReference>
<dbReference type="GeneTree" id="ENSGT00390000016108"/>
<dbReference type="HOGENOM" id="CLU_043234_1_0_1"/>
<dbReference type="InParanoid" id="Q96K21"/>
<dbReference type="OMA" id="CYRECHD"/>
<dbReference type="OrthoDB" id="5407799at2759"/>
<dbReference type="PAN-GO" id="Q96K21">
    <property type="GO annotations" value="6 GO annotations based on evolutionary models"/>
</dbReference>
<dbReference type="PhylomeDB" id="Q96K21"/>
<dbReference type="TreeFam" id="TF317652"/>
<dbReference type="PathwayCommons" id="Q96K21"/>
<dbReference type="SignaLink" id="Q96K21"/>
<dbReference type="BioGRID-ORCS" id="84936">
    <property type="hits" value="16 hits in 1160 CRISPR screens"/>
</dbReference>
<dbReference type="ChiTaRS" id="ZFYVE19">
    <property type="organism name" value="human"/>
</dbReference>
<dbReference type="GeneWiki" id="ZFYVE19"/>
<dbReference type="GenomeRNAi" id="84936"/>
<dbReference type="Pharos" id="Q96K21">
    <property type="development level" value="Tbio"/>
</dbReference>
<dbReference type="PRO" id="PR:Q96K21"/>
<dbReference type="Proteomes" id="UP000005640">
    <property type="component" value="Chromosome 15"/>
</dbReference>
<dbReference type="RNAct" id="Q96K21">
    <property type="molecule type" value="protein"/>
</dbReference>
<dbReference type="Bgee" id="ENSG00000166140">
    <property type="expression patterns" value="Expressed in lower esophagus mucosa and 141 other cell types or tissues"/>
</dbReference>
<dbReference type="ExpressionAtlas" id="Q96K21">
    <property type="expression patterns" value="baseline and differential"/>
</dbReference>
<dbReference type="GO" id="GO:0005813">
    <property type="term" value="C:centrosome"/>
    <property type="evidence" value="ECO:0000314"/>
    <property type="project" value="UniProtKB"/>
</dbReference>
<dbReference type="GO" id="GO:0032154">
    <property type="term" value="C:cleavage furrow"/>
    <property type="evidence" value="ECO:0000314"/>
    <property type="project" value="UniProtKB"/>
</dbReference>
<dbReference type="GO" id="GO:0005737">
    <property type="term" value="C:cytoplasm"/>
    <property type="evidence" value="ECO:0007669"/>
    <property type="project" value="UniProtKB-KW"/>
</dbReference>
<dbReference type="GO" id="GO:0090543">
    <property type="term" value="C:Flemming body"/>
    <property type="evidence" value="ECO:0007669"/>
    <property type="project" value="UniProtKB-SubCell"/>
</dbReference>
<dbReference type="GO" id="GO:0030496">
    <property type="term" value="C:midbody"/>
    <property type="evidence" value="ECO:0000314"/>
    <property type="project" value="UniProtKB"/>
</dbReference>
<dbReference type="GO" id="GO:0032266">
    <property type="term" value="F:phosphatidylinositol-3-phosphate binding"/>
    <property type="evidence" value="ECO:0000314"/>
    <property type="project" value="UniProtKB"/>
</dbReference>
<dbReference type="GO" id="GO:0008270">
    <property type="term" value="F:zinc ion binding"/>
    <property type="evidence" value="ECO:0007669"/>
    <property type="project" value="UniProtKB-KW"/>
</dbReference>
<dbReference type="GO" id="GO:0061952">
    <property type="term" value="P:midbody abscission"/>
    <property type="evidence" value="ECO:0000315"/>
    <property type="project" value="UniProtKB"/>
</dbReference>
<dbReference type="GO" id="GO:0044878">
    <property type="term" value="P:mitotic cytokinesis checkpoint signaling"/>
    <property type="evidence" value="ECO:0000315"/>
    <property type="project" value="UniProtKB"/>
</dbReference>
<dbReference type="GO" id="GO:0032466">
    <property type="term" value="P:negative regulation of cytokinesis"/>
    <property type="evidence" value="ECO:0000315"/>
    <property type="project" value="UniProtKB"/>
</dbReference>
<dbReference type="CDD" id="cd19817">
    <property type="entry name" value="Bbox1_ANCHR-like"/>
    <property type="match status" value="1"/>
</dbReference>
<dbReference type="CDD" id="cd15749">
    <property type="entry name" value="FYVE_ZFY19"/>
    <property type="match status" value="1"/>
</dbReference>
<dbReference type="FunFam" id="3.30.40.10:FF:000333">
    <property type="entry name" value="Zinc finger FYVE-type containing 19"/>
    <property type="match status" value="1"/>
</dbReference>
<dbReference type="Gene3D" id="3.30.40.10">
    <property type="entry name" value="Zinc/RING finger domain, C3HC4 (zinc finger)"/>
    <property type="match status" value="1"/>
</dbReference>
<dbReference type="InterPro" id="IPR044553">
    <property type="entry name" value="Bbox1_ANCHR"/>
</dbReference>
<dbReference type="InterPro" id="IPR000306">
    <property type="entry name" value="Znf_FYVE"/>
</dbReference>
<dbReference type="InterPro" id="IPR017455">
    <property type="entry name" value="Znf_FYVE-rel"/>
</dbReference>
<dbReference type="InterPro" id="IPR011011">
    <property type="entry name" value="Znf_FYVE_PHD"/>
</dbReference>
<dbReference type="InterPro" id="IPR013083">
    <property type="entry name" value="Znf_RING/FYVE/PHD"/>
</dbReference>
<dbReference type="PANTHER" id="PTHR46603">
    <property type="entry name" value="ABSCISSION/NOCUT CHECKPOINT REGULATOR"/>
    <property type="match status" value="1"/>
</dbReference>
<dbReference type="PANTHER" id="PTHR46603:SF1">
    <property type="entry name" value="ABSCISSION_NOCUT CHECKPOINT REGULATOR"/>
    <property type="match status" value="1"/>
</dbReference>
<dbReference type="Pfam" id="PF22586">
    <property type="entry name" value="ANCHR-like_BBOX"/>
    <property type="match status" value="1"/>
</dbReference>
<dbReference type="Pfam" id="PF01363">
    <property type="entry name" value="FYVE"/>
    <property type="match status" value="1"/>
</dbReference>
<dbReference type="SMART" id="SM00064">
    <property type="entry name" value="FYVE"/>
    <property type="match status" value="1"/>
</dbReference>
<dbReference type="SUPFAM" id="SSF57845">
    <property type="entry name" value="B-box zinc-binding domain"/>
    <property type="match status" value="1"/>
</dbReference>
<dbReference type="SUPFAM" id="SSF57903">
    <property type="entry name" value="FYVE/PHD zinc finger"/>
    <property type="match status" value="1"/>
</dbReference>
<dbReference type="PROSITE" id="PS50178">
    <property type="entry name" value="ZF_FYVE"/>
    <property type="match status" value="1"/>
</dbReference>
<keyword id="KW-0025">Alternative splicing</keyword>
<keyword id="KW-0131">Cell cycle</keyword>
<keyword id="KW-0132">Cell division</keyword>
<keyword id="KW-0160">Chromosomal rearrangement</keyword>
<keyword id="KW-1186">Ciliopathy</keyword>
<keyword id="KW-0175">Coiled coil</keyword>
<keyword id="KW-0963">Cytoplasm</keyword>
<keyword id="KW-0206">Cytoskeleton</keyword>
<keyword id="KW-0225">Disease variant</keyword>
<keyword id="KW-0988">Intrahepatic cholestasis</keyword>
<keyword id="KW-1017">Isopeptide bond</keyword>
<keyword id="KW-0446">Lipid-binding</keyword>
<keyword id="KW-0479">Metal-binding</keyword>
<keyword id="KW-0597">Phosphoprotein</keyword>
<keyword id="KW-1267">Proteomics identification</keyword>
<keyword id="KW-0656">Proto-oncogene</keyword>
<keyword id="KW-1185">Reference proteome</keyword>
<keyword id="KW-0832">Ubl conjugation</keyword>
<keyword id="KW-0862">Zinc</keyword>
<keyword id="KW-0863">Zinc-finger</keyword>